<comment type="function">
    <text evidence="1 4">Converts acetoacetate to acetoacetyl-CoA in the cytosol. Ketone body-utilizing enzyme, responsible for the synthesis of cholesterol and fatty acids.</text>
</comment>
<comment type="catalytic activity">
    <reaction evidence="1 4">
        <text>acetoacetate + ATP + CoA = acetoacetyl-CoA + AMP + diphosphate</text>
        <dbReference type="Rhea" id="RHEA:16117"/>
        <dbReference type="ChEBI" id="CHEBI:13705"/>
        <dbReference type="ChEBI" id="CHEBI:30616"/>
        <dbReference type="ChEBI" id="CHEBI:33019"/>
        <dbReference type="ChEBI" id="CHEBI:57286"/>
        <dbReference type="ChEBI" id="CHEBI:57287"/>
        <dbReference type="ChEBI" id="CHEBI:456215"/>
        <dbReference type="EC" id="6.2.1.16"/>
    </reaction>
    <physiologicalReaction direction="left-to-right" evidence="6">
        <dbReference type="Rhea" id="RHEA:16118"/>
    </physiologicalReaction>
</comment>
<comment type="subcellular location">
    <subcellularLocation>
        <location evidence="1 4">Cytoplasm</location>
        <location evidence="1 4">Cytosol</location>
    </subcellularLocation>
</comment>
<comment type="tissue specificity">
    <text evidence="2 3">Abundant in male subcutaneous white adipose tissue after weaning. In white adipose tissue, it is preferentially detected in mature adipocytes but not in preadipocytes. The expression in primary preadipocytes increases during the adipocyte differentiation. In brain, it is expressed in the midbrain, pons/medulla, cerebral cortex, hippocampus and cerebellum. The expression in the cerebellum is restricted primarily to glial cells, while in the cerebral cortex, it is restricted to neuronal cells.</text>
</comment>
<comment type="similarity">
    <text evidence="5">Belongs to the ATP-dependent AMP-binding enzyme family.</text>
</comment>
<sequence>MSKLARLEREEIMECQVMWEPDSKKDTQMDRFRAAVGTACGLALGNYDDLYHWSVRSYSDFWAEFWKFSGIVCSRMYDEVVDTSKGIADVPEWFRGSRLNYAENLLRHKENDRVALYVAREGREEIAKVTFEELRQQVALFAAAMRKMGVKKGDRVVGYLPNSAHAVEAMLAAASIGAIWSSTSPDFGVNGVLDRFSQIQPKLIFSVEAVVYNGKEHGHLEKLQRVVKGLPDLQRVVLIPYVLPREKIDISKIPNSMFLDDFLASGTGAQAPQLEFEQLPFSHPLFIMFSSGTTGAPKCMVHSAGGTLIQHLKEHVLHGNMTSSDILLYYTTVGWMMWNWMVSALATGASLVLYDGSPLVPTPNVLWDLVDRIGITILGTGAKWLSVLEEKDMKPMETHNLHTLHTILSTGSPLKAQSYEYVYRCIKSTVLLGSISGGTDIISCFMGQNSSIPVYKGEIQARNLGMAVEAWDEEGKTVWGASGELVCTKPIPCQPTHFWNDENGSKYRKAYFSKYPGVWAHGDYCRINPKTGGIVMLGRSDGTLNPNGVRFGSSEIYNIVEAFDEVEDSLCVPQYNRDGEERVVLFLKMASGHTFQPDLVKHIRDAIRLGLSARHVPSLILETQGIPYTINGKKVEVAVKQVIAGKTVEHRGAFSNPESLDLYRDIPELQDF</sequence>
<proteinExistence type="evidence at protein level"/>
<dbReference type="EC" id="6.2.1.16" evidence="1 4"/>
<dbReference type="EMBL" id="AB026291">
    <property type="protein sequence ID" value="BAA90828.1"/>
    <property type="molecule type" value="mRNA"/>
</dbReference>
<dbReference type="EMBL" id="BC061803">
    <property type="protein sequence ID" value="AAH61803.1"/>
    <property type="molecule type" value="mRNA"/>
</dbReference>
<dbReference type="RefSeq" id="NP_075592.1">
    <property type="nucleotide sequence ID" value="NM_023104.2"/>
</dbReference>
<dbReference type="SMR" id="Q9JMI1"/>
<dbReference type="FunCoup" id="Q9JMI1">
    <property type="interactions" value="242"/>
</dbReference>
<dbReference type="STRING" id="10116.ENSRNOP00000001292"/>
<dbReference type="iPTMnet" id="Q9JMI1"/>
<dbReference type="PhosphoSitePlus" id="Q9JMI1"/>
<dbReference type="jPOST" id="Q9JMI1"/>
<dbReference type="PaxDb" id="10116-ENSRNOP00000001292"/>
<dbReference type="Ensembl" id="ENSRNOT00000001292.6">
    <property type="protein sequence ID" value="ENSRNOP00000001292.3"/>
    <property type="gene ID" value="ENSRNOG00000000967.6"/>
</dbReference>
<dbReference type="GeneID" id="65984"/>
<dbReference type="KEGG" id="rno:65984"/>
<dbReference type="UCSC" id="RGD:708522">
    <property type="organism name" value="rat"/>
</dbReference>
<dbReference type="AGR" id="RGD:708522"/>
<dbReference type="CTD" id="65985"/>
<dbReference type="RGD" id="708522">
    <property type="gene designation" value="Aacs"/>
</dbReference>
<dbReference type="eggNOG" id="KOG1175">
    <property type="taxonomic scope" value="Eukaryota"/>
</dbReference>
<dbReference type="GeneTree" id="ENSGT00940000156044"/>
<dbReference type="HOGENOM" id="CLU_000022_3_3_1"/>
<dbReference type="InParanoid" id="Q9JMI1"/>
<dbReference type="OMA" id="MPNTWQT"/>
<dbReference type="OrthoDB" id="4092at9989"/>
<dbReference type="PhylomeDB" id="Q9JMI1"/>
<dbReference type="TreeFam" id="TF354241"/>
<dbReference type="BRENDA" id="2.3.1.194">
    <property type="organism ID" value="5301"/>
</dbReference>
<dbReference type="BRENDA" id="6.2.1.16">
    <property type="organism ID" value="5301"/>
</dbReference>
<dbReference type="Reactome" id="R-RNO-77111">
    <property type="pathway name" value="Synthesis of Ketone Bodies"/>
</dbReference>
<dbReference type="SABIO-RK" id="Q9JMI1"/>
<dbReference type="PRO" id="PR:Q9JMI1"/>
<dbReference type="Proteomes" id="UP000002494">
    <property type="component" value="Chromosome 12"/>
</dbReference>
<dbReference type="Bgee" id="ENSRNOG00000000967">
    <property type="expression patterns" value="Expressed in thymus and 20 other cell types or tissues"/>
</dbReference>
<dbReference type="GO" id="GO:0005829">
    <property type="term" value="C:cytosol"/>
    <property type="evidence" value="ECO:0007669"/>
    <property type="project" value="UniProtKB-SubCell"/>
</dbReference>
<dbReference type="GO" id="GO:0030729">
    <property type="term" value="F:acetoacetate-CoA ligase activity"/>
    <property type="evidence" value="ECO:0000314"/>
    <property type="project" value="RGD"/>
</dbReference>
<dbReference type="GO" id="GO:0005524">
    <property type="term" value="F:ATP binding"/>
    <property type="evidence" value="ECO:0007669"/>
    <property type="project" value="UniProtKB-KW"/>
</dbReference>
<dbReference type="GO" id="GO:0031955">
    <property type="term" value="F:short-chain fatty acid-CoA ligase activity"/>
    <property type="evidence" value="ECO:0000314"/>
    <property type="project" value="RGD"/>
</dbReference>
<dbReference type="GO" id="GO:0060612">
    <property type="term" value="P:adipose tissue development"/>
    <property type="evidence" value="ECO:0000270"/>
    <property type="project" value="RGD"/>
</dbReference>
<dbReference type="GO" id="GO:0071397">
    <property type="term" value="P:cellular response to cholesterol"/>
    <property type="evidence" value="ECO:0000270"/>
    <property type="project" value="RGD"/>
</dbReference>
<dbReference type="GO" id="GO:0071333">
    <property type="term" value="P:cellular response to glucose stimulus"/>
    <property type="evidence" value="ECO:0000315"/>
    <property type="project" value="RGD"/>
</dbReference>
<dbReference type="GO" id="GO:0071394">
    <property type="term" value="P:cellular response to testosterone stimulus"/>
    <property type="evidence" value="ECO:0000270"/>
    <property type="project" value="RGD"/>
</dbReference>
<dbReference type="GO" id="GO:0006631">
    <property type="term" value="P:fatty acid metabolic process"/>
    <property type="evidence" value="ECO:0007669"/>
    <property type="project" value="UniProtKB-KW"/>
</dbReference>
<dbReference type="GO" id="GO:0001889">
    <property type="term" value="P:liver development"/>
    <property type="evidence" value="ECO:0000314"/>
    <property type="project" value="RGD"/>
</dbReference>
<dbReference type="GO" id="GO:0032024">
    <property type="term" value="P:positive regulation of insulin secretion"/>
    <property type="evidence" value="ECO:0000315"/>
    <property type="project" value="RGD"/>
</dbReference>
<dbReference type="GO" id="GO:0045471">
    <property type="term" value="P:response to ethanol"/>
    <property type="evidence" value="ECO:0000314"/>
    <property type="project" value="RGD"/>
</dbReference>
<dbReference type="GO" id="GO:0007584">
    <property type="term" value="P:response to nutrient"/>
    <property type="evidence" value="ECO:0000314"/>
    <property type="project" value="RGD"/>
</dbReference>
<dbReference type="GO" id="GO:0034201">
    <property type="term" value="P:response to oleic acid"/>
    <property type="evidence" value="ECO:0000314"/>
    <property type="project" value="RGD"/>
</dbReference>
<dbReference type="GO" id="GO:0014074">
    <property type="term" value="P:response to purine-containing compound"/>
    <property type="evidence" value="ECO:0000270"/>
    <property type="project" value="RGD"/>
</dbReference>
<dbReference type="GO" id="GO:0042594">
    <property type="term" value="P:response to starvation"/>
    <property type="evidence" value="ECO:0000270"/>
    <property type="project" value="RGD"/>
</dbReference>
<dbReference type="GO" id="GO:0009410">
    <property type="term" value="P:response to xenobiotic stimulus"/>
    <property type="evidence" value="ECO:0000314"/>
    <property type="project" value="RGD"/>
</dbReference>
<dbReference type="GO" id="GO:0050872">
    <property type="term" value="P:white fat cell differentiation"/>
    <property type="evidence" value="ECO:0000270"/>
    <property type="project" value="RGD"/>
</dbReference>
<dbReference type="CDD" id="cd05943">
    <property type="entry name" value="AACS"/>
    <property type="match status" value="1"/>
</dbReference>
<dbReference type="FunFam" id="3.40.50.12780:FF:000036">
    <property type="entry name" value="Acetoacetyl-CoA synthetase"/>
    <property type="match status" value="1"/>
</dbReference>
<dbReference type="FunFam" id="3.30.300.30:FF:000037">
    <property type="entry name" value="acetoacetyl-CoA synthetase"/>
    <property type="match status" value="1"/>
</dbReference>
<dbReference type="Gene3D" id="3.30.300.30">
    <property type="match status" value="1"/>
</dbReference>
<dbReference type="Gene3D" id="3.40.50.12780">
    <property type="entry name" value="N-terminal domain of ligase-like"/>
    <property type="match status" value="1"/>
</dbReference>
<dbReference type="InterPro" id="IPR005914">
    <property type="entry name" value="Acac_CoA_synth"/>
</dbReference>
<dbReference type="InterPro" id="IPR032387">
    <property type="entry name" value="ACAS_N"/>
</dbReference>
<dbReference type="InterPro" id="IPR045851">
    <property type="entry name" value="AMP-bd_C_sf"/>
</dbReference>
<dbReference type="InterPro" id="IPR020845">
    <property type="entry name" value="AMP-binding_CS"/>
</dbReference>
<dbReference type="InterPro" id="IPR000873">
    <property type="entry name" value="AMP-dep_synth/lig_dom"/>
</dbReference>
<dbReference type="InterPro" id="IPR042099">
    <property type="entry name" value="ANL_N_sf"/>
</dbReference>
<dbReference type="NCBIfam" id="TIGR01217">
    <property type="entry name" value="ac_ac_CoA_syn"/>
    <property type="match status" value="1"/>
</dbReference>
<dbReference type="NCBIfam" id="NF002937">
    <property type="entry name" value="PRK03584.1"/>
    <property type="match status" value="1"/>
</dbReference>
<dbReference type="PANTHER" id="PTHR42921">
    <property type="entry name" value="ACETOACETYL-COA SYNTHETASE"/>
    <property type="match status" value="1"/>
</dbReference>
<dbReference type="PANTHER" id="PTHR42921:SF1">
    <property type="entry name" value="ACETOACETYL-COA SYNTHETASE"/>
    <property type="match status" value="1"/>
</dbReference>
<dbReference type="Pfam" id="PF16177">
    <property type="entry name" value="ACAS_N"/>
    <property type="match status" value="1"/>
</dbReference>
<dbReference type="Pfam" id="PF00501">
    <property type="entry name" value="AMP-binding"/>
    <property type="match status" value="1"/>
</dbReference>
<dbReference type="SUPFAM" id="SSF56801">
    <property type="entry name" value="Acetyl-CoA synthetase-like"/>
    <property type="match status" value="1"/>
</dbReference>
<dbReference type="PROSITE" id="PS00455">
    <property type="entry name" value="AMP_BINDING"/>
    <property type="match status" value="1"/>
</dbReference>
<accession>Q9JMI1</accession>
<protein>
    <recommendedName>
        <fullName>Acetoacetyl-CoA synthetase</fullName>
        <ecNumber evidence="1 4">6.2.1.16</ecNumber>
    </recommendedName>
</protein>
<feature type="chain" id="PRO_0000315787" description="Acetoacetyl-CoA synthetase">
    <location>
        <begin position="1"/>
        <end position="672"/>
    </location>
</feature>
<name>AACS_RAT</name>
<keyword id="KW-0067">ATP-binding</keyword>
<keyword id="KW-0963">Cytoplasm</keyword>
<keyword id="KW-0903">Direct protein sequencing</keyword>
<keyword id="KW-0276">Fatty acid metabolism</keyword>
<keyword id="KW-0436">Ligase</keyword>
<keyword id="KW-0443">Lipid metabolism</keyword>
<keyword id="KW-0547">Nucleotide-binding</keyword>
<keyword id="KW-1185">Reference proteome</keyword>
<reference key="1">
    <citation type="journal article" date="2000" name="FEBS Lett.">
        <title>cDNA-derived amino acid sequence of acetoacetyl-CoA synthetase from rat liver.</title>
        <authorList>
            <person name="Iwahori A."/>
            <person name="Takahashi N."/>
            <person name="Nakamoto M."/>
            <person name="Iwama M."/>
            <person name="Fukui T."/>
        </authorList>
    </citation>
    <scope>NUCLEOTIDE SEQUENCE [MRNA]</scope>
    <scope>PROTEIN SEQUENCE OF 87-94; 236-242; 258-267; 370-377; 533-539; 558-567; 583-588 AND 647-671</scope>
    <scope>CATALYTIC ACTIVITY</scope>
    <scope>SUBCELLULAR LOCATION</scope>
    <source>
        <strain>Sprague-Dawley</strain>
        <tissue>Liver</tissue>
    </source>
</reference>
<reference key="2">
    <citation type="journal article" date="2004" name="Genome Res.">
        <title>The status, quality, and expansion of the NIH full-length cDNA project: the Mammalian Gene Collection (MGC).</title>
        <authorList>
            <consortium name="The MGC Project Team"/>
        </authorList>
    </citation>
    <scope>NUCLEOTIDE SEQUENCE [LARGE SCALE MRNA]</scope>
    <source>
        <tissue>Prostate</tissue>
    </source>
</reference>
<reference key="3">
    <citation type="journal article" date="1986" name="Biochim. Biophys. Acta">
        <title>Acetoacetyl-CoA synthetase specific activity and concentration in rat tissues.</title>
        <authorList>
            <person name="Ito M."/>
            <person name="Fukui T."/>
            <person name="Saito T."/>
            <person name="Tomita K."/>
        </authorList>
    </citation>
    <scope>SUBCELLULAR LOCATION</scope>
    <scope>FUNCTION</scope>
    <scope>CATALYTIC ACTIVITY</scope>
</reference>
<reference key="4">
    <citation type="journal article" date="2005" name="Biochim. Biophys. Acta">
        <title>Different localization in rat brain of the novel cytosolic ketone body-utilizing enzyme, acetoacetyl-CoA synthetase, as compared to succinyl-CoA:3-oxoacid CoA-transferase.</title>
        <authorList>
            <person name="Ohnuki M."/>
            <person name="Takahashi N."/>
            <person name="Yamasaki M."/>
            <person name="Fukui T."/>
        </authorList>
    </citation>
    <scope>TISSUE SPECIFICITY</scope>
</reference>
<reference key="5">
    <citation type="journal article" date="2005" name="Biochem. Biophys. Res. Commun.">
        <title>Acetoacetyl-CoA synthetase gene is abundant in rat adipose, and related with fatty acid synthesis in mature adipocytes.</title>
        <authorList>
            <person name="Yamasaki M."/>
            <person name="Hasegawa S."/>
            <person name="Suzuki H."/>
            <person name="Hidai K."/>
            <person name="Saitoh Y."/>
            <person name="Fukui T."/>
        </authorList>
    </citation>
    <scope>TISSUE SPECIFICITY</scope>
</reference>
<organism>
    <name type="scientific">Rattus norvegicus</name>
    <name type="common">Rat</name>
    <dbReference type="NCBI Taxonomy" id="10116"/>
    <lineage>
        <taxon>Eukaryota</taxon>
        <taxon>Metazoa</taxon>
        <taxon>Chordata</taxon>
        <taxon>Craniata</taxon>
        <taxon>Vertebrata</taxon>
        <taxon>Euteleostomi</taxon>
        <taxon>Mammalia</taxon>
        <taxon>Eutheria</taxon>
        <taxon>Euarchontoglires</taxon>
        <taxon>Glires</taxon>
        <taxon>Rodentia</taxon>
        <taxon>Myomorpha</taxon>
        <taxon>Muroidea</taxon>
        <taxon>Muridae</taxon>
        <taxon>Murinae</taxon>
        <taxon>Rattus</taxon>
    </lineage>
</organism>
<evidence type="ECO:0000269" key="1">
    <source>
    </source>
</evidence>
<evidence type="ECO:0000269" key="2">
    <source>
    </source>
</evidence>
<evidence type="ECO:0000269" key="3">
    <source>
    </source>
</evidence>
<evidence type="ECO:0000269" key="4">
    <source>
    </source>
</evidence>
<evidence type="ECO:0000305" key="5"/>
<evidence type="ECO:0000305" key="6">
    <source>
    </source>
</evidence>
<gene>
    <name type="primary">Aacs</name>
</gene>